<evidence type="ECO:0000255" key="1">
    <source>
        <dbReference type="HAMAP-Rule" id="MF_02045"/>
    </source>
</evidence>
<feature type="chain" id="PRO_0000074986" description="Phosphoribosylaminoimidazole carboxylase">
    <location>
        <begin position="1"/>
        <end position="180"/>
    </location>
</feature>
<feature type="binding site" evidence="1">
    <location>
        <position position="35"/>
    </location>
    <ligand>
        <name>substrate</name>
    </ligand>
</feature>
<feature type="binding site" evidence="1">
    <location>
        <position position="38"/>
    </location>
    <ligand>
        <name>substrate</name>
    </ligand>
</feature>
<feature type="binding site" evidence="1">
    <location>
        <position position="62"/>
    </location>
    <ligand>
        <name>substrate</name>
    </ligand>
</feature>
<feature type="binding site" evidence="1">
    <location>
        <position position="65"/>
    </location>
    <ligand>
        <name>substrate</name>
    </ligand>
</feature>
<feature type="binding site" evidence="1">
    <location>
        <position position="89"/>
    </location>
    <ligand>
        <name>substrate</name>
    </ligand>
</feature>
<feature type="binding site" evidence="1">
    <location>
        <position position="91"/>
    </location>
    <ligand>
        <name>substrate</name>
    </ligand>
</feature>
<protein>
    <recommendedName>
        <fullName evidence="1">Phosphoribosylaminoimidazole carboxylase</fullName>
        <ecNumber evidence="1">4.1.1.21</ecNumber>
    </recommendedName>
    <alternativeName>
        <fullName evidence="1">AIR carboxylase</fullName>
        <shortName evidence="1">AIRC</shortName>
    </alternativeName>
</protein>
<name>PURE_ARCFU</name>
<organism>
    <name type="scientific">Archaeoglobus fulgidus (strain ATCC 49558 / DSM 4304 / JCM 9628 / NBRC 100126 / VC-16)</name>
    <dbReference type="NCBI Taxonomy" id="224325"/>
    <lineage>
        <taxon>Archaea</taxon>
        <taxon>Methanobacteriati</taxon>
        <taxon>Methanobacteriota</taxon>
        <taxon>Archaeoglobi</taxon>
        <taxon>Archaeoglobales</taxon>
        <taxon>Archaeoglobaceae</taxon>
        <taxon>Archaeoglobus</taxon>
    </lineage>
</organism>
<keyword id="KW-0456">Lyase</keyword>
<keyword id="KW-0658">Purine biosynthesis</keyword>
<keyword id="KW-1185">Reference proteome</keyword>
<reference key="1">
    <citation type="journal article" date="1997" name="Nature">
        <title>The complete genome sequence of the hyperthermophilic, sulphate-reducing archaeon Archaeoglobus fulgidus.</title>
        <authorList>
            <person name="Klenk H.-P."/>
            <person name="Clayton R.A."/>
            <person name="Tomb J.-F."/>
            <person name="White O."/>
            <person name="Nelson K.E."/>
            <person name="Ketchum K.A."/>
            <person name="Dodson R.J."/>
            <person name="Gwinn M.L."/>
            <person name="Hickey E.K."/>
            <person name="Peterson J.D."/>
            <person name="Richardson D.L."/>
            <person name="Kerlavage A.R."/>
            <person name="Graham D.E."/>
            <person name="Kyrpides N.C."/>
            <person name="Fleischmann R.D."/>
            <person name="Quackenbush J."/>
            <person name="Lee N.H."/>
            <person name="Sutton G.G."/>
            <person name="Gill S.R."/>
            <person name="Kirkness E.F."/>
            <person name="Dougherty B.A."/>
            <person name="McKenney K."/>
            <person name="Adams M.D."/>
            <person name="Loftus B.J."/>
            <person name="Peterson S.N."/>
            <person name="Reich C.I."/>
            <person name="McNeil L.K."/>
            <person name="Badger J.H."/>
            <person name="Glodek A."/>
            <person name="Zhou L."/>
            <person name="Overbeek R."/>
            <person name="Gocayne J.D."/>
            <person name="Weidman J.F."/>
            <person name="McDonald L.A."/>
            <person name="Utterback T.R."/>
            <person name="Cotton M.D."/>
            <person name="Spriggs T."/>
            <person name="Artiach P."/>
            <person name="Kaine B.P."/>
            <person name="Sykes S.M."/>
            <person name="Sadow P.W."/>
            <person name="D'Andrea K.P."/>
            <person name="Bowman C."/>
            <person name="Fujii C."/>
            <person name="Garland S.A."/>
            <person name="Mason T.M."/>
            <person name="Olsen G.J."/>
            <person name="Fraser C.M."/>
            <person name="Smith H.O."/>
            <person name="Woese C.R."/>
            <person name="Venter J.C."/>
        </authorList>
    </citation>
    <scope>NUCLEOTIDE SEQUENCE [LARGE SCALE GENOMIC DNA]</scope>
    <source>
        <strain>ATCC 49558 / DSM 4304 / JCM 9628 / NBRC 100126 / VC-16</strain>
    </source>
</reference>
<sequence length="180" mass="20015">MSQFLSLRNCLRLTIRLLRQFRRGEGMKAVIIMGSKSDLDYSKKIASKLADFGIDAVMRIASAHKTPEKVLEIIKEYEKEDVVFVTVAGRSNALSGFVDANTSKPVIASPPYSDKFGGADIFSSIRMPSGVAPMLVLEAENAALAVAKIFALKDEGVREKVVQFQENKRREIYKADEELR</sequence>
<accession>O28997</accession>
<gene>
    <name evidence="1" type="primary">purE</name>
    <name type="ordered locus">AF_1271</name>
</gene>
<dbReference type="EC" id="4.1.1.21" evidence="1"/>
<dbReference type="EMBL" id="AE000782">
    <property type="protein sequence ID" value="AAB89973.1"/>
    <property type="molecule type" value="Genomic_DNA"/>
</dbReference>
<dbReference type="PIR" id="F69408">
    <property type="entry name" value="F69408"/>
</dbReference>
<dbReference type="SMR" id="O28997"/>
<dbReference type="STRING" id="224325.AF_1271"/>
<dbReference type="PaxDb" id="224325-AF_1271"/>
<dbReference type="EnsemblBacteria" id="AAB89973">
    <property type="protein sequence ID" value="AAB89973"/>
    <property type="gene ID" value="AF_1271"/>
</dbReference>
<dbReference type="KEGG" id="afu:AF_1271"/>
<dbReference type="eggNOG" id="arCOG02464">
    <property type="taxonomic scope" value="Archaea"/>
</dbReference>
<dbReference type="HOGENOM" id="CLU_094982_2_0_2"/>
<dbReference type="OrthoDB" id="9473at2157"/>
<dbReference type="PhylomeDB" id="O28997"/>
<dbReference type="UniPathway" id="UPA00074">
    <property type="reaction ID" value="UER00130"/>
</dbReference>
<dbReference type="Proteomes" id="UP000002199">
    <property type="component" value="Chromosome"/>
</dbReference>
<dbReference type="GO" id="GO:0004638">
    <property type="term" value="F:phosphoribosylaminoimidazole carboxylase activity"/>
    <property type="evidence" value="ECO:0007669"/>
    <property type="project" value="UniProtKB-UniRule"/>
</dbReference>
<dbReference type="GO" id="GO:0006189">
    <property type="term" value="P:'de novo' IMP biosynthetic process"/>
    <property type="evidence" value="ECO:0007669"/>
    <property type="project" value="UniProtKB-UniRule"/>
</dbReference>
<dbReference type="Gene3D" id="3.40.50.1970">
    <property type="match status" value="1"/>
</dbReference>
<dbReference type="HAMAP" id="MF_02045">
    <property type="entry name" value="PurE_classII"/>
    <property type="match status" value="1"/>
</dbReference>
<dbReference type="InterPro" id="IPR033626">
    <property type="entry name" value="PurE_classII"/>
</dbReference>
<dbReference type="InterPro" id="IPR000031">
    <property type="entry name" value="PurE_dom"/>
</dbReference>
<dbReference type="InterPro" id="IPR024694">
    <property type="entry name" value="PurE_prokaryotes"/>
</dbReference>
<dbReference type="NCBIfam" id="TIGR01162">
    <property type="entry name" value="purE"/>
    <property type="match status" value="1"/>
</dbReference>
<dbReference type="PANTHER" id="PTHR23046:SF2">
    <property type="entry name" value="PHOSPHORIBOSYLAMINOIMIDAZOLE CARBOXYLASE"/>
    <property type="match status" value="1"/>
</dbReference>
<dbReference type="PANTHER" id="PTHR23046">
    <property type="entry name" value="PHOSPHORIBOSYLAMINOIMIDAZOLE CARBOXYLASE CATALYTIC SUBUNIT"/>
    <property type="match status" value="1"/>
</dbReference>
<dbReference type="Pfam" id="PF00731">
    <property type="entry name" value="AIRC"/>
    <property type="match status" value="1"/>
</dbReference>
<dbReference type="PIRSF" id="PIRSF001338">
    <property type="entry name" value="AIR_carboxylase"/>
    <property type="match status" value="1"/>
</dbReference>
<dbReference type="SMART" id="SM01001">
    <property type="entry name" value="AIRC"/>
    <property type="match status" value="1"/>
</dbReference>
<dbReference type="SUPFAM" id="SSF52255">
    <property type="entry name" value="N5-CAIR mutase (phosphoribosylaminoimidazole carboxylase, PurE)"/>
    <property type="match status" value="1"/>
</dbReference>
<comment type="function">
    <text evidence="1">Catalyzes the reversible conversion of 5-aminoimidazole ribonucleotide (AIR) and CO(2) to 4-carboxy-5-aminoimidazole ribonucleotide (CAIR).</text>
</comment>
<comment type="catalytic activity">
    <reaction evidence="1">
        <text>5-amino-1-(5-phospho-D-ribosyl)imidazole-4-carboxylate + H(+) = 5-amino-1-(5-phospho-beta-D-ribosyl)imidazole + CO2</text>
        <dbReference type="Rhea" id="RHEA:10792"/>
        <dbReference type="ChEBI" id="CHEBI:15378"/>
        <dbReference type="ChEBI" id="CHEBI:16526"/>
        <dbReference type="ChEBI" id="CHEBI:77657"/>
        <dbReference type="ChEBI" id="CHEBI:137981"/>
        <dbReference type="EC" id="4.1.1.21"/>
    </reaction>
</comment>
<comment type="pathway">
    <text evidence="1">Purine metabolism; IMP biosynthesis via de novo pathway; 5-amino-1-(5-phospho-D-ribosyl)imidazole-4-carboxylate from 5-amino-1-(5-phospho-D-ribosyl)imidazole (carboxylase route): step 1/1.</text>
</comment>
<comment type="similarity">
    <text evidence="1">Belongs to the AIR carboxylase family. Class II subfamily.</text>
</comment>
<proteinExistence type="inferred from homology"/>